<name>HSL27_DICDI</name>
<reference key="1">
    <citation type="journal article" date="1990" name="Mol. Microbiol.">
        <title>Two cyclic AMP-regulated genes from Dictyostelium discoideum encode homologous proteins.</title>
        <authorList>
            <person name="Ramji D.P."/>
            <person name="Richards A.J."/>
            <person name="Jagger P."/>
            <person name="Bleasby A."/>
            <person name="Hames B.D."/>
        </authorList>
    </citation>
    <scope>NUCLEOTIDE SEQUENCE [MRNA]</scope>
    <source>
        <strain>AX2</strain>
    </source>
</reference>
<reference key="2">
    <citation type="journal article" date="2002" name="Nature">
        <title>Sequence and analysis of chromosome 2 of Dictyostelium discoideum.</title>
        <authorList>
            <person name="Gloeckner G."/>
            <person name="Eichinger L."/>
            <person name="Szafranski K."/>
            <person name="Pachebat J.A."/>
            <person name="Bankier A.T."/>
            <person name="Dear P.H."/>
            <person name="Lehmann R."/>
            <person name="Baumgart C."/>
            <person name="Parra G."/>
            <person name="Abril J.F."/>
            <person name="Guigo R."/>
            <person name="Kumpf K."/>
            <person name="Tunggal B."/>
            <person name="Cox E.C."/>
            <person name="Quail M.A."/>
            <person name="Platzer M."/>
            <person name="Rosenthal A."/>
            <person name="Noegel A.A."/>
        </authorList>
    </citation>
    <scope>NUCLEOTIDE SEQUENCE [LARGE SCALE GENOMIC DNA]</scope>
    <source>
        <strain>AX4</strain>
    </source>
</reference>
<reference key="3">
    <citation type="journal article" date="2005" name="Nature">
        <title>The genome of the social amoeba Dictyostelium discoideum.</title>
        <authorList>
            <person name="Eichinger L."/>
            <person name="Pachebat J.A."/>
            <person name="Gloeckner G."/>
            <person name="Rajandream M.A."/>
            <person name="Sucgang R."/>
            <person name="Berriman M."/>
            <person name="Song J."/>
            <person name="Olsen R."/>
            <person name="Szafranski K."/>
            <person name="Xu Q."/>
            <person name="Tunggal B."/>
            <person name="Kummerfeld S."/>
            <person name="Madera M."/>
            <person name="Konfortov B.A."/>
            <person name="Rivero F."/>
            <person name="Bankier A.T."/>
            <person name="Lehmann R."/>
            <person name="Hamlin N."/>
            <person name="Davies R."/>
            <person name="Gaudet P."/>
            <person name="Fey P."/>
            <person name="Pilcher K."/>
            <person name="Chen G."/>
            <person name="Saunders D."/>
            <person name="Sodergren E.J."/>
            <person name="Davis P."/>
            <person name="Kerhornou A."/>
            <person name="Nie X."/>
            <person name="Hall N."/>
            <person name="Anjard C."/>
            <person name="Hemphill L."/>
            <person name="Bason N."/>
            <person name="Farbrother P."/>
            <person name="Desany B."/>
            <person name="Just E."/>
            <person name="Morio T."/>
            <person name="Rost R."/>
            <person name="Churcher C.M."/>
            <person name="Cooper J."/>
            <person name="Haydock S."/>
            <person name="van Driessche N."/>
            <person name="Cronin A."/>
            <person name="Goodhead I."/>
            <person name="Muzny D.M."/>
            <person name="Mourier T."/>
            <person name="Pain A."/>
            <person name="Lu M."/>
            <person name="Harper D."/>
            <person name="Lindsay R."/>
            <person name="Hauser H."/>
            <person name="James K.D."/>
            <person name="Quiles M."/>
            <person name="Madan Babu M."/>
            <person name="Saito T."/>
            <person name="Buchrieser C."/>
            <person name="Wardroper A."/>
            <person name="Felder M."/>
            <person name="Thangavelu M."/>
            <person name="Johnson D."/>
            <person name="Knights A."/>
            <person name="Loulseged H."/>
            <person name="Mungall K.L."/>
            <person name="Oliver K."/>
            <person name="Price C."/>
            <person name="Quail M.A."/>
            <person name="Urushihara H."/>
            <person name="Hernandez J."/>
            <person name="Rabbinowitsch E."/>
            <person name="Steffen D."/>
            <person name="Sanders M."/>
            <person name="Ma J."/>
            <person name="Kohara Y."/>
            <person name="Sharp S."/>
            <person name="Simmonds M.N."/>
            <person name="Spiegler S."/>
            <person name="Tivey A."/>
            <person name="Sugano S."/>
            <person name="White B."/>
            <person name="Walker D."/>
            <person name="Woodward J.R."/>
            <person name="Winckler T."/>
            <person name="Tanaka Y."/>
            <person name="Shaulsky G."/>
            <person name="Schleicher M."/>
            <person name="Weinstock G.M."/>
            <person name="Rosenthal A."/>
            <person name="Cox E.C."/>
            <person name="Chisholm R.L."/>
            <person name="Gibbs R.A."/>
            <person name="Loomis W.F."/>
            <person name="Platzer M."/>
            <person name="Kay R.R."/>
            <person name="Williams J.G."/>
            <person name="Dear P.H."/>
            <person name="Noegel A.A."/>
            <person name="Barrell B.G."/>
            <person name="Kuspa A."/>
        </authorList>
    </citation>
    <scope>NUCLEOTIDE SEQUENCE [LARGE SCALE GENOMIC DNA]</scope>
    <source>
        <strain>AX4</strain>
    </source>
</reference>
<reference key="4">
    <citation type="journal article" date="1990" name="Mol. Microbiol.">
        <title>Developmental regulation of cell-type-enriched mRNAs in Dictyostelium discoideum.</title>
        <authorList>
            <person name="Corney A.J."/>
            <person name="Richards A.J."/>
            <person name="Phillpots T."/>
            <person name="Hames B.D."/>
        </authorList>
    </citation>
    <scope>DEVELOPMENTAL STAGE</scope>
    <scope>INDUCTION</scope>
</reference>
<reference key="5">
    <citation type="journal article" date="1990" name="Mol. Microbiol.">
        <title>Cell-type-specific genes expressed late in Dictyostelium development show markedly different responses to 3'5' cyclic AMP.</title>
        <authorList>
            <person name="Richards A.J."/>
            <person name="Corney A.J."/>
            <person name="Hames B.D."/>
        </authorList>
    </citation>
    <scope>DEVELOPMENTAL STAGE</scope>
    <scope>INDUCTION</scope>
</reference>
<accession>P15649</accession>
<accession>Q553J8</accession>
<accession>Q86H90</accession>
<dbReference type="EMBL" id="X16959">
    <property type="protein sequence ID" value="CAA34832.1"/>
    <property type="molecule type" value="mRNA"/>
</dbReference>
<dbReference type="EMBL" id="AAFI02000013">
    <property type="protein sequence ID" value="EAL69469.1"/>
    <property type="molecule type" value="Genomic_DNA"/>
</dbReference>
<dbReference type="PIR" id="S08136">
    <property type="entry name" value="S08136"/>
</dbReference>
<dbReference type="RefSeq" id="XP_643415.1">
    <property type="nucleotide sequence ID" value="XM_638323.1"/>
</dbReference>
<dbReference type="FunCoup" id="P15649">
    <property type="interactions" value="62"/>
</dbReference>
<dbReference type="PaxDb" id="44689-DDB0219940"/>
<dbReference type="EnsemblProtists" id="EAL69469">
    <property type="protein sequence ID" value="EAL69469"/>
    <property type="gene ID" value="DDB_G0275437"/>
</dbReference>
<dbReference type="GeneID" id="8620001"/>
<dbReference type="KEGG" id="ddi:DDB_G0275437"/>
<dbReference type="dictyBase" id="DDB_G0275437">
    <property type="gene designation" value="7E"/>
</dbReference>
<dbReference type="VEuPathDB" id="AmoebaDB:DDB_G0275437"/>
<dbReference type="HOGENOM" id="CLU_2404148_0_0_1"/>
<dbReference type="InParanoid" id="P15649"/>
<dbReference type="PRO" id="PR:P15649"/>
<dbReference type="Proteomes" id="UP000002195">
    <property type="component" value="Chromosome 2"/>
</dbReference>
<dbReference type="GO" id="GO:0031154">
    <property type="term" value="P:culmination involved in sorocarp development"/>
    <property type="evidence" value="ECO:0000270"/>
    <property type="project" value="UniProtKB"/>
</dbReference>
<dbReference type="GO" id="GO:0031153">
    <property type="term" value="P:slug development involved in sorocarp development"/>
    <property type="evidence" value="ECO:0000270"/>
    <property type="project" value="UniProtKB"/>
</dbReference>
<dbReference type="GO" id="GO:0030587">
    <property type="term" value="P:sorocarp development"/>
    <property type="evidence" value="ECO:0000316"/>
    <property type="project" value="dictyBase"/>
</dbReference>
<dbReference type="InterPro" id="IPR050533">
    <property type="entry name" value="HssA/B-like_chaperone"/>
</dbReference>
<dbReference type="InterPro" id="IPR008455">
    <property type="entry name" value="HssA/B-related"/>
</dbReference>
<dbReference type="PANTHER" id="PTHR31059">
    <property type="entry name" value="HSSA/B-LIKE PROTEIN 1-RELATED-RELATED"/>
    <property type="match status" value="1"/>
</dbReference>
<dbReference type="PANTHER" id="PTHR31059:SF5">
    <property type="entry name" value="HSSA_B-LIKE PROTEIN 1-RELATED"/>
    <property type="match status" value="1"/>
</dbReference>
<dbReference type="Pfam" id="PF05710">
    <property type="entry name" value="Coiled"/>
    <property type="match status" value="1"/>
</dbReference>
<gene>
    <name type="primary">hssl27</name>
    <name type="synonym">7E</name>
    <name type="ORF">DDB_G0275437</name>
</gene>
<evidence type="ECO:0000269" key="1">
    <source>
    </source>
</evidence>
<evidence type="ECO:0000269" key="2">
    <source>
    </source>
</evidence>
<evidence type="ECO:0000305" key="3"/>
<organism>
    <name type="scientific">Dictyostelium discoideum</name>
    <name type="common">Social amoeba</name>
    <dbReference type="NCBI Taxonomy" id="44689"/>
    <lineage>
        <taxon>Eukaryota</taxon>
        <taxon>Amoebozoa</taxon>
        <taxon>Evosea</taxon>
        <taxon>Eumycetozoa</taxon>
        <taxon>Dictyostelia</taxon>
        <taxon>Dictyosteliales</taxon>
        <taxon>Dictyosteliaceae</taxon>
        <taxon>Dictyostelium</taxon>
    </lineage>
</organism>
<keyword id="KW-1185">Reference proteome</keyword>
<protein>
    <recommendedName>
        <fullName>HssA/B-like protein 27</fullName>
    </recommendedName>
    <alternativeName>
        <fullName>Protein 7E</fullName>
    </alternativeName>
</protein>
<proteinExistence type="evidence at transcript level"/>
<comment type="developmental stage">
    <text evidence="1 2">Expressed in the prestalk cells and prespore cells. Expressed only late in development. First detected in finger stage and expression levels peak in late culmination (18-22 hours). Its expression ceases upon cell disaggregation but is fully restored by exogenous cAMP.</text>
</comment>
<comment type="induction">
    <text evidence="1 2">By exogenous cAMP.</text>
</comment>
<comment type="similarity">
    <text evidence="3">Belongs to the hssA/B family.</text>
</comment>
<feature type="chain" id="PRO_0000064400" description="HssA/B-like protein 27">
    <location>
        <begin position="1"/>
        <end position="97"/>
    </location>
</feature>
<feature type="sequence conflict" description="In Ref. 1; CAA34832." evidence="3" ref="1">
    <original>N</original>
    <variation>I</variation>
    <location>
        <position position="97"/>
    </location>
</feature>
<sequence>MTILASICKLGNTKSTSSSIGSSYSSAVSFGSNSVSCGECGGDGPSFPNASPRTGVKAGVNVDGLLGAIGKTVNGMLISPNGGGGGMGMGGGSCGCN</sequence>